<dbReference type="EMBL" id="AABR07053729">
    <property type="status" value="NOT_ANNOTATED_CDS"/>
    <property type="molecule type" value="Genomic_DNA"/>
</dbReference>
<dbReference type="EMBL" id="CH473949">
    <property type="protein sequence ID" value="EDL80174.1"/>
    <property type="molecule type" value="Genomic_DNA"/>
</dbReference>
<dbReference type="EMBL" id="BC158686">
    <property type="protein sequence ID" value="AAI58687.1"/>
    <property type="molecule type" value="mRNA"/>
</dbReference>
<dbReference type="EMBL" id="M29295">
    <property type="protein sequence ID" value="AAA42159.1"/>
    <property type="status" value="ALT_INIT"/>
    <property type="molecule type" value="mRNA"/>
</dbReference>
<dbReference type="PIR" id="B34503">
    <property type="entry name" value="B34503"/>
</dbReference>
<dbReference type="RefSeq" id="NP_599185.1">
    <property type="nucleotide sequence ID" value="NM_134358.1"/>
</dbReference>
<dbReference type="SMR" id="P17136"/>
<dbReference type="FunCoup" id="P17136">
    <property type="interactions" value="2957"/>
</dbReference>
<dbReference type="STRING" id="10116.ENSRNOP00000039298"/>
<dbReference type="PhosphoSitePlus" id="P17136"/>
<dbReference type="jPOST" id="P17136"/>
<dbReference type="PaxDb" id="10116-ENSRNOP00000039298"/>
<dbReference type="PeptideAtlas" id="P17136"/>
<dbReference type="Ensembl" id="ENSRNOT00000049857.5">
    <property type="protein sequence ID" value="ENSRNOP00000039298.3"/>
    <property type="gene ID" value="ENSRNOG00000006961.8"/>
</dbReference>
<dbReference type="GeneID" id="171365"/>
<dbReference type="KEGG" id="rno:171365"/>
<dbReference type="UCSC" id="RGD:621301">
    <property type="organism name" value="rat"/>
</dbReference>
<dbReference type="AGR" id="RGD:621301"/>
<dbReference type="CTD" id="6628"/>
<dbReference type="RGD" id="621301">
    <property type="gene designation" value="Snrpb"/>
</dbReference>
<dbReference type="eggNOG" id="KOG3168">
    <property type="taxonomic scope" value="Eukaryota"/>
</dbReference>
<dbReference type="GeneTree" id="ENSGT00940000155052"/>
<dbReference type="HOGENOM" id="CLU_076902_1_0_1"/>
<dbReference type="InParanoid" id="P17136"/>
<dbReference type="OMA" id="KMINYRM"/>
<dbReference type="OrthoDB" id="2020720at2759"/>
<dbReference type="PhylomeDB" id="P17136"/>
<dbReference type="TreeFam" id="TF314232"/>
<dbReference type="Reactome" id="R-RNO-111367">
    <property type="pathway name" value="SLBP independent Processing of Histone Pre-mRNAs"/>
</dbReference>
<dbReference type="Reactome" id="R-RNO-191859">
    <property type="pathway name" value="snRNP Assembly"/>
</dbReference>
<dbReference type="Reactome" id="R-RNO-72163">
    <property type="pathway name" value="mRNA Splicing - Major Pathway"/>
</dbReference>
<dbReference type="Reactome" id="R-RNO-72165">
    <property type="pathway name" value="mRNA Splicing - Minor Pathway"/>
</dbReference>
<dbReference type="Reactome" id="R-RNO-73856">
    <property type="pathway name" value="RNA Polymerase II Transcription Termination"/>
</dbReference>
<dbReference type="Reactome" id="R-RNO-77588">
    <property type="pathway name" value="SLBP Dependent Processing of Replication-Dependent Histone Pre-mRNAs"/>
</dbReference>
<dbReference type="PRO" id="PR:P17136"/>
<dbReference type="Proteomes" id="UP000002494">
    <property type="component" value="Chromosome 3"/>
</dbReference>
<dbReference type="Proteomes" id="UP000234681">
    <property type="component" value="Chromosome 3"/>
</dbReference>
<dbReference type="Bgee" id="ENSRNOG00000006961">
    <property type="expression patterns" value="Expressed in thymus and 19 other cell types or tissues"/>
</dbReference>
<dbReference type="ExpressionAtlas" id="P17136">
    <property type="expression patterns" value="baseline and differential"/>
</dbReference>
<dbReference type="GO" id="GO:0071013">
    <property type="term" value="C:catalytic step 2 spliceosome"/>
    <property type="evidence" value="ECO:0000266"/>
    <property type="project" value="RGD"/>
</dbReference>
<dbReference type="GO" id="GO:0005737">
    <property type="term" value="C:cytoplasm"/>
    <property type="evidence" value="ECO:0000266"/>
    <property type="project" value="RGD"/>
</dbReference>
<dbReference type="GO" id="GO:0005829">
    <property type="term" value="C:cytosol"/>
    <property type="evidence" value="ECO:0000250"/>
    <property type="project" value="UniProtKB"/>
</dbReference>
<dbReference type="GO" id="GO:0071204">
    <property type="term" value="C:histone pre-mRNA 3'end processing complex"/>
    <property type="evidence" value="ECO:0000266"/>
    <property type="project" value="RGD"/>
</dbReference>
<dbReference type="GO" id="GO:0034709">
    <property type="term" value="C:methylosome"/>
    <property type="evidence" value="ECO:0000250"/>
    <property type="project" value="UniProtKB"/>
</dbReference>
<dbReference type="GO" id="GO:0005654">
    <property type="term" value="C:nucleoplasm"/>
    <property type="evidence" value="ECO:0007669"/>
    <property type="project" value="Ensembl"/>
</dbReference>
<dbReference type="GO" id="GO:0005634">
    <property type="term" value="C:nucleus"/>
    <property type="evidence" value="ECO:0000266"/>
    <property type="project" value="RGD"/>
</dbReference>
<dbReference type="GO" id="GO:0034719">
    <property type="term" value="C:SMN-Sm protein complex"/>
    <property type="evidence" value="ECO:0000250"/>
    <property type="project" value="UniProtKB"/>
</dbReference>
<dbReference type="GO" id="GO:0005681">
    <property type="term" value="C:spliceosomal complex"/>
    <property type="evidence" value="ECO:0000266"/>
    <property type="project" value="RGD"/>
</dbReference>
<dbReference type="GO" id="GO:0005697">
    <property type="term" value="C:telomerase holoenzyme complex"/>
    <property type="evidence" value="ECO:0000266"/>
    <property type="project" value="RGD"/>
</dbReference>
<dbReference type="GO" id="GO:0005685">
    <property type="term" value="C:U1 snRNP"/>
    <property type="evidence" value="ECO:0000314"/>
    <property type="project" value="RGD"/>
</dbReference>
<dbReference type="GO" id="GO:0005689">
    <property type="term" value="C:U12-type spliceosomal complex"/>
    <property type="evidence" value="ECO:0000266"/>
    <property type="project" value="RGD"/>
</dbReference>
<dbReference type="GO" id="GO:0005686">
    <property type="term" value="C:U2 snRNP"/>
    <property type="evidence" value="ECO:0000314"/>
    <property type="project" value="RGD"/>
</dbReference>
<dbReference type="GO" id="GO:0071007">
    <property type="term" value="C:U2-type catalytic step 2 spliceosome"/>
    <property type="evidence" value="ECO:0000250"/>
    <property type="project" value="UniProtKB"/>
</dbReference>
<dbReference type="GO" id="GO:0071005">
    <property type="term" value="C:U2-type precatalytic spliceosome"/>
    <property type="evidence" value="ECO:0000250"/>
    <property type="project" value="UniProtKB"/>
</dbReference>
<dbReference type="GO" id="GO:0071004">
    <property type="term" value="C:U2-type prespliceosome"/>
    <property type="evidence" value="ECO:0000318"/>
    <property type="project" value="GO_Central"/>
</dbReference>
<dbReference type="GO" id="GO:0005684">
    <property type="term" value="C:U2-type spliceosomal complex"/>
    <property type="evidence" value="ECO:0000266"/>
    <property type="project" value="RGD"/>
</dbReference>
<dbReference type="GO" id="GO:0005687">
    <property type="term" value="C:U4 snRNP"/>
    <property type="evidence" value="ECO:0000250"/>
    <property type="project" value="UniProtKB"/>
</dbReference>
<dbReference type="GO" id="GO:0046540">
    <property type="term" value="C:U4/U6 x U5 tri-snRNP complex"/>
    <property type="evidence" value="ECO:0000250"/>
    <property type="project" value="UniProtKB"/>
</dbReference>
<dbReference type="GO" id="GO:0005682">
    <property type="term" value="C:U5 snRNP"/>
    <property type="evidence" value="ECO:0000318"/>
    <property type="project" value="GO_Central"/>
</dbReference>
<dbReference type="GO" id="GO:0005683">
    <property type="term" value="C:U7 snRNP"/>
    <property type="evidence" value="ECO:0000250"/>
    <property type="project" value="UniProtKB"/>
</dbReference>
<dbReference type="GO" id="GO:0071208">
    <property type="term" value="F:histone pre-mRNA DCP binding"/>
    <property type="evidence" value="ECO:0000266"/>
    <property type="project" value="RGD"/>
</dbReference>
<dbReference type="GO" id="GO:0003723">
    <property type="term" value="F:RNA binding"/>
    <property type="evidence" value="ECO:0000266"/>
    <property type="project" value="RGD"/>
</dbReference>
<dbReference type="GO" id="GO:0070990">
    <property type="term" value="F:snRNP binding"/>
    <property type="evidence" value="ECO:0000318"/>
    <property type="project" value="GO_Central"/>
</dbReference>
<dbReference type="GO" id="GO:0070034">
    <property type="term" value="F:telomerase RNA binding"/>
    <property type="evidence" value="ECO:0000266"/>
    <property type="project" value="RGD"/>
</dbReference>
<dbReference type="GO" id="GO:1990446">
    <property type="term" value="F:U1 snRNP binding"/>
    <property type="evidence" value="ECO:0000314"/>
    <property type="project" value="RGD"/>
</dbReference>
<dbReference type="GO" id="GO:1990447">
    <property type="term" value="F:U2 snRNP binding"/>
    <property type="evidence" value="ECO:0000314"/>
    <property type="project" value="RGD"/>
</dbReference>
<dbReference type="GO" id="GO:0000398">
    <property type="term" value="P:mRNA splicing, via spliceosome"/>
    <property type="evidence" value="ECO:0000250"/>
    <property type="project" value="UniProtKB"/>
</dbReference>
<dbReference type="GO" id="GO:0000387">
    <property type="term" value="P:spliceosomal snRNP assembly"/>
    <property type="evidence" value="ECO:0000250"/>
    <property type="project" value="UniProtKB"/>
</dbReference>
<dbReference type="CDD" id="cd01717">
    <property type="entry name" value="Sm_B"/>
    <property type="match status" value="1"/>
</dbReference>
<dbReference type="FunFam" id="2.30.30.100:FF:000004">
    <property type="entry name" value="Small nuclear ribonucleoprotein-associated proteins"/>
    <property type="match status" value="1"/>
</dbReference>
<dbReference type="Gene3D" id="2.30.30.100">
    <property type="match status" value="1"/>
</dbReference>
<dbReference type="InterPro" id="IPR010920">
    <property type="entry name" value="LSM_dom_sf"/>
</dbReference>
<dbReference type="InterPro" id="IPR047575">
    <property type="entry name" value="Sm"/>
</dbReference>
<dbReference type="InterPro" id="IPR001163">
    <property type="entry name" value="Sm_dom_euk/arc"/>
</dbReference>
<dbReference type="InterPro" id="IPR017131">
    <property type="entry name" value="snRNP-assoc_SmB/SmN"/>
</dbReference>
<dbReference type="PANTHER" id="PTHR14508">
    <property type="entry name" value="SNRPN UPSTREAM READING FRAME PROTEIN, SNURF"/>
    <property type="match status" value="1"/>
</dbReference>
<dbReference type="PANTHER" id="PTHR14508:SF2">
    <property type="entry name" value="SNRPN UPSTREAM READING FRAME PROTEIN-RELATED"/>
    <property type="match status" value="1"/>
</dbReference>
<dbReference type="Pfam" id="PF01423">
    <property type="entry name" value="LSM"/>
    <property type="match status" value="1"/>
</dbReference>
<dbReference type="PIRSF" id="PIRSF037187">
    <property type="entry name" value="snRNP_SmB/SmN"/>
    <property type="match status" value="1"/>
</dbReference>
<dbReference type="SMART" id="SM00651">
    <property type="entry name" value="Sm"/>
    <property type="match status" value="1"/>
</dbReference>
<dbReference type="SUPFAM" id="SSF50182">
    <property type="entry name" value="Sm-like ribonucleoproteins"/>
    <property type="match status" value="1"/>
</dbReference>
<dbReference type="PROSITE" id="PS52002">
    <property type="entry name" value="SM"/>
    <property type="match status" value="1"/>
</dbReference>
<evidence type="ECO:0000250" key="1">
    <source>
        <dbReference type="UniProtKB" id="P14678"/>
    </source>
</evidence>
<evidence type="ECO:0000250" key="2">
    <source>
        <dbReference type="UniProtKB" id="P27048"/>
    </source>
</evidence>
<evidence type="ECO:0000250" key="3">
    <source>
        <dbReference type="UniProtKB" id="P63162"/>
    </source>
</evidence>
<evidence type="ECO:0000255" key="4">
    <source>
        <dbReference type="PROSITE-ProRule" id="PRU01346"/>
    </source>
</evidence>
<evidence type="ECO:0000256" key="5">
    <source>
        <dbReference type="SAM" id="MobiDB-lite"/>
    </source>
</evidence>
<evidence type="ECO:0000305" key="6"/>
<evidence type="ECO:0000312" key="7">
    <source>
        <dbReference type="EMBL" id="AAI58687.1"/>
    </source>
</evidence>
<feature type="chain" id="PRO_0000125520" description="Small nuclear ribonucleoprotein-associated protein B">
    <location>
        <begin position="1"/>
        <end position="231"/>
    </location>
</feature>
<feature type="domain" description="Sm" evidence="4">
    <location>
        <begin position="4"/>
        <end position="86"/>
    </location>
</feature>
<feature type="repeat">
    <location>
        <begin position="175"/>
        <end position="181"/>
    </location>
</feature>
<feature type="repeat">
    <location>
        <begin position="191"/>
        <end position="196"/>
    </location>
</feature>
<feature type="repeat">
    <location>
        <begin position="216"/>
        <end position="221"/>
    </location>
</feature>
<feature type="repeat">
    <location>
        <begin position="222"/>
        <end position="228"/>
    </location>
</feature>
<feature type="region of interest" description="Disordered" evidence="5">
    <location>
        <begin position="163"/>
        <end position="231"/>
    </location>
</feature>
<feature type="region of interest" description="Repeat-rich region">
    <location>
        <begin position="175"/>
        <end position="228"/>
    </location>
</feature>
<feature type="compositionally biased region" description="Pro residues" evidence="5">
    <location>
        <begin position="172"/>
        <end position="205"/>
    </location>
</feature>
<feature type="compositionally biased region" description="Pro residues" evidence="5">
    <location>
        <begin position="214"/>
        <end position="231"/>
    </location>
</feature>
<feature type="modified residue" description="Asymmetric dimethylarginine; alternate" evidence="1">
    <location>
        <position position="108"/>
    </location>
</feature>
<feature type="modified residue" description="Dimethylated arginine; alternate" evidence="1">
    <location>
        <position position="108"/>
    </location>
</feature>
<feature type="modified residue" description="Omega-N-methylarginine; alternate" evidence="1">
    <location>
        <position position="108"/>
    </location>
</feature>
<feature type="modified residue" description="Asymmetric dimethylarginine; alternate" evidence="1">
    <location>
        <position position="112"/>
    </location>
</feature>
<feature type="modified residue" description="Dimethylated arginine; alternate" evidence="1">
    <location>
        <position position="112"/>
    </location>
</feature>
<feature type="modified residue" description="Omega-N-methylarginine; alternate" evidence="1">
    <location>
        <position position="112"/>
    </location>
</feature>
<feature type="modified residue" description="Omega-N-methylarginine" evidence="1">
    <location>
        <position position="147"/>
    </location>
</feature>
<feature type="modified residue" description="Omega-N-methylarginine" evidence="3">
    <location>
        <position position="172"/>
    </location>
</feature>
<feature type="sequence conflict" description="In Ref. 4; AAA42159." evidence="6" ref="4">
    <original>I</original>
    <variation>S</variation>
    <location>
        <position position="20"/>
    </location>
</feature>
<feature type="sequence conflict" description="In Ref. 4; AAA42159." evidence="6" ref="4">
    <original>D</original>
    <variation>N</variation>
    <location>
        <position position="23"/>
    </location>
</feature>
<name>RSMB_RAT</name>
<protein>
    <recommendedName>
        <fullName>Small nuclear ribonucleoprotein-associated protein B</fullName>
        <shortName>snRNP-B</shortName>
        <shortName>snRPB</shortName>
    </recommendedName>
    <alternativeName>
        <fullName>SM11</fullName>
    </alternativeName>
    <alternativeName>
        <fullName>Sm protein B</fullName>
        <shortName>Sm-B</shortName>
        <shortName>SmB</shortName>
    </alternativeName>
</protein>
<accession>P17136</accession>
<accession>B0BN51</accession>
<reference key="1">
    <citation type="journal article" date="2004" name="Nature">
        <title>Genome sequence of the Brown Norway rat yields insights into mammalian evolution.</title>
        <authorList>
            <person name="Gibbs R.A."/>
            <person name="Weinstock G.M."/>
            <person name="Metzker M.L."/>
            <person name="Muzny D.M."/>
            <person name="Sodergren E.J."/>
            <person name="Scherer S."/>
            <person name="Scott G."/>
            <person name="Steffen D."/>
            <person name="Worley K.C."/>
            <person name="Burch P.E."/>
            <person name="Okwuonu G."/>
            <person name="Hines S."/>
            <person name="Lewis L."/>
            <person name="Deramo C."/>
            <person name="Delgado O."/>
            <person name="Dugan-Rocha S."/>
            <person name="Miner G."/>
            <person name="Morgan M."/>
            <person name="Hawes A."/>
            <person name="Gill R."/>
            <person name="Holt R.A."/>
            <person name="Adams M.D."/>
            <person name="Amanatides P.G."/>
            <person name="Baden-Tillson H."/>
            <person name="Barnstead M."/>
            <person name="Chin S."/>
            <person name="Evans C.A."/>
            <person name="Ferriera S."/>
            <person name="Fosler C."/>
            <person name="Glodek A."/>
            <person name="Gu Z."/>
            <person name="Jennings D."/>
            <person name="Kraft C.L."/>
            <person name="Nguyen T."/>
            <person name="Pfannkoch C.M."/>
            <person name="Sitter C."/>
            <person name="Sutton G.G."/>
            <person name="Venter J.C."/>
            <person name="Woodage T."/>
            <person name="Smith D."/>
            <person name="Lee H.-M."/>
            <person name="Gustafson E."/>
            <person name="Cahill P."/>
            <person name="Kana A."/>
            <person name="Doucette-Stamm L."/>
            <person name="Weinstock K."/>
            <person name="Fechtel K."/>
            <person name="Weiss R.B."/>
            <person name="Dunn D.M."/>
            <person name="Green E.D."/>
            <person name="Blakesley R.W."/>
            <person name="Bouffard G.G."/>
            <person name="De Jong P.J."/>
            <person name="Osoegawa K."/>
            <person name="Zhu B."/>
            <person name="Marra M."/>
            <person name="Schein J."/>
            <person name="Bosdet I."/>
            <person name="Fjell C."/>
            <person name="Jones S."/>
            <person name="Krzywinski M."/>
            <person name="Mathewson C."/>
            <person name="Siddiqui A."/>
            <person name="Wye N."/>
            <person name="McPherson J."/>
            <person name="Zhao S."/>
            <person name="Fraser C.M."/>
            <person name="Shetty J."/>
            <person name="Shatsman S."/>
            <person name="Geer K."/>
            <person name="Chen Y."/>
            <person name="Abramzon S."/>
            <person name="Nierman W.C."/>
            <person name="Havlak P.H."/>
            <person name="Chen R."/>
            <person name="Durbin K.J."/>
            <person name="Egan A."/>
            <person name="Ren Y."/>
            <person name="Song X.-Z."/>
            <person name="Li B."/>
            <person name="Liu Y."/>
            <person name="Qin X."/>
            <person name="Cawley S."/>
            <person name="Cooney A.J."/>
            <person name="D'Souza L.M."/>
            <person name="Martin K."/>
            <person name="Wu J.Q."/>
            <person name="Gonzalez-Garay M.L."/>
            <person name="Jackson A.R."/>
            <person name="Kalafus K.J."/>
            <person name="McLeod M.P."/>
            <person name="Milosavljevic A."/>
            <person name="Virk D."/>
            <person name="Volkov A."/>
            <person name="Wheeler D.A."/>
            <person name="Zhang Z."/>
            <person name="Bailey J.A."/>
            <person name="Eichler E.E."/>
            <person name="Tuzun E."/>
            <person name="Birney E."/>
            <person name="Mongin E."/>
            <person name="Ureta-Vidal A."/>
            <person name="Woodwark C."/>
            <person name="Zdobnov E."/>
            <person name="Bork P."/>
            <person name="Suyama M."/>
            <person name="Torrents D."/>
            <person name="Alexandersson M."/>
            <person name="Trask B.J."/>
            <person name="Young J.M."/>
            <person name="Huang H."/>
            <person name="Wang H."/>
            <person name="Xing H."/>
            <person name="Daniels S."/>
            <person name="Gietzen D."/>
            <person name="Schmidt J."/>
            <person name="Stevens K."/>
            <person name="Vitt U."/>
            <person name="Wingrove J."/>
            <person name="Camara F."/>
            <person name="Mar Alba M."/>
            <person name="Abril J.F."/>
            <person name="Guigo R."/>
            <person name="Smit A."/>
            <person name="Dubchak I."/>
            <person name="Rubin E.M."/>
            <person name="Couronne O."/>
            <person name="Poliakov A."/>
            <person name="Huebner N."/>
            <person name="Ganten D."/>
            <person name="Goesele C."/>
            <person name="Hummel O."/>
            <person name="Kreitler T."/>
            <person name="Lee Y.-A."/>
            <person name="Monti J."/>
            <person name="Schulz H."/>
            <person name="Zimdahl H."/>
            <person name="Himmelbauer H."/>
            <person name="Lehrach H."/>
            <person name="Jacob H.J."/>
            <person name="Bromberg S."/>
            <person name="Gullings-Handley J."/>
            <person name="Jensen-Seaman M.I."/>
            <person name="Kwitek A.E."/>
            <person name="Lazar J."/>
            <person name="Pasko D."/>
            <person name="Tonellato P.J."/>
            <person name="Twigger S."/>
            <person name="Ponting C.P."/>
            <person name="Duarte J.M."/>
            <person name="Rice S."/>
            <person name="Goodstadt L."/>
            <person name="Beatson S.A."/>
            <person name="Emes R.D."/>
            <person name="Winter E.E."/>
            <person name="Webber C."/>
            <person name="Brandt P."/>
            <person name="Nyakatura G."/>
            <person name="Adetobi M."/>
            <person name="Chiaromonte F."/>
            <person name="Elnitski L."/>
            <person name="Eswara P."/>
            <person name="Hardison R.C."/>
            <person name="Hou M."/>
            <person name="Kolbe D."/>
            <person name="Makova K."/>
            <person name="Miller W."/>
            <person name="Nekrutenko A."/>
            <person name="Riemer C."/>
            <person name="Schwartz S."/>
            <person name="Taylor J."/>
            <person name="Yang S."/>
            <person name="Zhang Y."/>
            <person name="Lindpaintner K."/>
            <person name="Andrews T.D."/>
            <person name="Caccamo M."/>
            <person name="Clamp M."/>
            <person name="Clarke L."/>
            <person name="Curwen V."/>
            <person name="Durbin R.M."/>
            <person name="Eyras E."/>
            <person name="Searle S.M."/>
            <person name="Cooper G.M."/>
            <person name="Batzoglou S."/>
            <person name="Brudno M."/>
            <person name="Sidow A."/>
            <person name="Stone E.A."/>
            <person name="Payseur B.A."/>
            <person name="Bourque G."/>
            <person name="Lopez-Otin C."/>
            <person name="Puente X.S."/>
            <person name="Chakrabarti K."/>
            <person name="Chatterji S."/>
            <person name="Dewey C."/>
            <person name="Pachter L."/>
            <person name="Bray N."/>
            <person name="Yap V.B."/>
            <person name="Caspi A."/>
            <person name="Tesler G."/>
            <person name="Pevzner P.A."/>
            <person name="Haussler D."/>
            <person name="Roskin K.M."/>
            <person name="Baertsch R."/>
            <person name="Clawson H."/>
            <person name="Furey T.S."/>
            <person name="Hinrichs A.S."/>
            <person name="Karolchik D."/>
            <person name="Kent W.J."/>
            <person name="Rosenbloom K.R."/>
            <person name="Trumbower H."/>
            <person name="Weirauch M."/>
            <person name="Cooper D.N."/>
            <person name="Stenson P.D."/>
            <person name="Ma B."/>
            <person name="Brent M."/>
            <person name="Arumugam M."/>
            <person name="Shteynberg D."/>
            <person name="Copley R.R."/>
            <person name="Taylor M.S."/>
            <person name="Riethman H."/>
            <person name="Mudunuri U."/>
            <person name="Peterson J."/>
            <person name="Guyer M."/>
            <person name="Felsenfeld A."/>
            <person name="Old S."/>
            <person name="Mockrin S."/>
            <person name="Collins F.S."/>
        </authorList>
    </citation>
    <scope>NUCLEOTIDE SEQUENCE [LARGE SCALE GENOMIC DNA]</scope>
    <source>
        <strain>Brown Norway</strain>
    </source>
</reference>
<reference key="2">
    <citation type="submission" date="2005-07" db="EMBL/GenBank/DDBJ databases">
        <authorList>
            <person name="Mural R.J."/>
            <person name="Adams M.D."/>
            <person name="Myers E.W."/>
            <person name="Smith H.O."/>
            <person name="Venter J.C."/>
        </authorList>
    </citation>
    <scope>NUCLEOTIDE SEQUENCE [LARGE SCALE GENOMIC DNA]</scope>
</reference>
<reference key="3">
    <citation type="journal article" date="2004" name="Genome Res.">
        <title>The status, quality, and expansion of the NIH full-length cDNA project: the Mammalian Gene Collection (MGC).</title>
        <authorList>
            <consortium name="The MGC Project Team"/>
        </authorList>
    </citation>
    <scope>NUCLEOTIDE SEQUENCE [LARGE SCALE MRNA]</scope>
    <source>
        <tissue evidence="7">Liver</tissue>
    </source>
</reference>
<reference key="4">
    <citation type="journal article" date="1989" name="Proc. Natl. Acad. Sci. U.S.A.">
        <title>Isolation of cDNA clones encoding small nuclear ribonucleoparticle-associated proteins with different tissue specificities.</title>
        <authorList>
            <person name="Li S."/>
            <person name="Klein E.S."/>
            <person name="Russo A.F."/>
            <person name="Simmons D.M."/>
            <person name="Rosenfeld M.G."/>
        </authorList>
    </citation>
    <scope>NUCLEOTIDE SEQUENCE [MRNA] OF 19-231</scope>
</reference>
<gene>
    <name type="primary">Snrpb</name>
</gene>
<proteinExistence type="evidence at transcript level"/>
<comment type="function">
    <text evidence="1">Plays a role in pre-mRNA splicing as a core component of the spliceosomal U1, U2, U4 and U5 small nuclear ribonucleoproteins (snRNPs), the building blocks of the spliceosome (By similarity). Component of both the pre-catalytic spliceosome B complex and activated spliceosome C complexes (By similarity). As a component of the minor spliceosome, involved in the splicing of U12-type introns in pre-mRNAs (By similarity). As part of the U7 snRNP it is involved in histone pre-mRNA 3'-end processing (By similarity).</text>
</comment>
<comment type="subunit">
    <text evidence="1 2">Core component of the spliceosomal U1, U2, U4 and U5 small nuclear ribonucleoproteins (snRNPs), the building blocks of the spliceosome (By similarity). Most spliceosomal snRNPs contain a common set of Sm proteins, SNRPB, SNRPD1, SNRPD2, SNRPD3, SNRPE, SNRPF and SNRPG that assemble in a heptameric protein ring on the Sm site of the small nuclear RNA to form the core snRNP (By similarity). Component of the U1 snRNP (By similarity). The U1 snRNP is composed of the U1 snRNA and the 7 core Sm proteins SNRPB, SNRPD1, SNRPD2, SNRPD3, SNRPE, SNRPF and SNRPG, and at least three U1 snRNP-specific proteins SNRNP70/U1-70K, SNRPA/U1-A and SNRPC/U1-C (By similarity). Component of the U4/U6-U5 tri-snRNP complex composed of the U4, U6 and U5 snRNAs and at least PRPF3, PRPF4, PRPF6, PRPF8, PRPF31, SNRNP200, TXNL4A, SNRNP40, SNRPB, SNRPD1, SNRPD2, SNRPD3, SNRPE, SNRPF, SNRPG, DDX23, CD2BP2, PPIH, SNU13, EFTUD2, SART1 and USP39, plus LSM2, LSM3, LSM4, LSM5, LSM6, LSM7 and LSM8 (By similarity). Component of the U7 snRNP complex, or U7 Sm protein core complex, that is composed of the U7 snRNA and at least LSM10, LSM11, SNRPB, SNRPD3, SNRPE, SNRPF and SNRPG; the complex does not contain SNRPD1 and SNRPD2 (By similarity). Component of the minor spliceosome, which splices U12-type introns (By similarity). Part of the SMN-Sm complex that contains SMN1, GEMIN2/SIP1, DDX20/GEMIN3, GEMIN4, GEMIN5, GEMIN6, GEMIN7, GEMIN8, STRAP/UNRIP and the Sm proteins SNRPB, SNRPD1, SNRPD2, SNRPD3, SNRPE, SNRPF and SNRPG; catalyzes core snRNPs assembly (By similarity). Forms a 6S pICln-Sm complex composed of CLNS1A/pICln, SNRPD1, SNRPD2, SNRPE, SNRPF and SNRPG; ring-like structure where CLNS1A/pICln mimics additional Sm proteins and which is unable to assemble into the core snRNP (By similarity). Identified in a histone pre-mRNA complex, at least composed of ERI1, LSM11, SLBP, SNRPB, SYNCRIP and YBX1 (By similarity). Interacts with TDRD3 and SNUPN (By similarity). Interacts with PRMT5; interaction leads to its symmetric arginine dimethylation (By similarity). Interacts with TDRD6; interaction promotes association with PRMT5 (By similarity). Interacts with SMN1; the interaction is direct (By similarity).</text>
</comment>
<comment type="subcellular location">
    <subcellularLocation>
        <location evidence="1">Cytoplasm</location>
        <location evidence="1">Cytosol</location>
    </subcellularLocation>
    <subcellularLocation>
        <location evidence="1">Nucleus</location>
    </subcellularLocation>
    <text evidence="1">SMN-mediated assembly into core snRNPs occurs in the cytosol before SMN-mediated transport to the nucleus to be included in spliceosomes.</text>
</comment>
<comment type="tissue specificity">
    <text>Heart, and less in brain, pituitary and liver.</text>
</comment>
<comment type="PTM">
    <text evidence="1 2">Methylated by PRMT5 (By similarity). Arg-108 and Arg-112 are dimethylated, probably to asymmetric dimethylarginine (By similarity).</text>
</comment>
<comment type="similarity">
    <text evidence="6">Belongs to the snRNP SmB/SmN family.</text>
</comment>
<comment type="sequence caution" evidence="6">
    <conflict type="erroneous initiation">
        <sequence resource="EMBL-CDS" id="AAA42159"/>
    </conflict>
    <text>Extended N-terminus.</text>
</comment>
<keyword id="KW-0963">Cytoplasm</keyword>
<keyword id="KW-0488">Methylation</keyword>
<keyword id="KW-0507">mRNA processing</keyword>
<keyword id="KW-0508">mRNA splicing</keyword>
<keyword id="KW-0539">Nucleus</keyword>
<keyword id="KW-1185">Reference proteome</keyword>
<keyword id="KW-0677">Repeat</keyword>
<keyword id="KW-0687">Ribonucleoprotein</keyword>
<keyword id="KW-0694">RNA-binding</keyword>
<keyword id="KW-0747">Spliceosome</keyword>
<organism>
    <name type="scientific">Rattus norvegicus</name>
    <name type="common">Rat</name>
    <dbReference type="NCBI Taxonomy" id="10116"/>
    <lineage>
        <taxon>Eukaryota</taxon>
        <taxon>Metazoa</taxon>
        <taxon>Chordata</taxon>
        <taxon>Craniata</taxon>
        <taxon>Vertebrata</taxon>
        <taxon>Euteleostomi</taxon>
        <taxon>Mammalia</taxon>
        <taxon>Eutheria</taxon>
        <taxon>Euarchontoglires</taxon>
        <taxon>Glires</taxon>
        <taxon>Rodentia</taxon>
        <taxon>Myomorpha</taxon>
        <taxon>Muroidea</taxon>
        <taxon>Muridae</taxon>
        <taxon>Murinae</taxon>
        <taxon>Rattus</taxon>
    </lineage>
</organism>
<sequence>MTVGKSSKMLQHIDYRMRCILQDGRIFIGTFKAFDKHMNLILCDCDEFRKIKPKNSKQAEREEKRVLGLVLLRGENLVSMTVEGPPPKDTGIARVPLAGAAGGPGIGRAAGRGIPAGVPMPQAPAGLAGPVRGVGGPSQQVMTPQGRGTVAAAAAAATASIAGAPTQYPPGRGGPPPPMGRGAPPPGMMGPPPGMRPPMGPPMGIPPGRGTPMGMPPPGMRPPPPGMRGLL</sequence>